<accession>Q4QLF0</accession>
<gene>
    <name type="ordered locus">NTHI1314</name>
</gene>
<protein>
    <recommendedName>
        <fullName evidence="1">Nucleotide-binding protein NTHI1314</fullName>
    </recommendedName>
</protein>
<proteinExistence type="inferred from homology"/>
<sequence length="285" mass="32629">MEIIIISGRSGAGKSVALRALEDTGYYCVDNIPLDLLPQLTDILSQSQSSVAISLDIRNIPSSANSLEQTLSTLQKHHQIKIIFLEADRATLIRRYSDSRRLHPLSLKDLSLEAAIDEEYRYLEPLIQHANLILDTTHLSTHILAERLREFLRDNSEKELKIIVESFGFKYGIPLDADYVFDVRFLPNPHWDPTLRPMTGLEAPVAEFLNSHTEVNEFIYLTRHYIDTWLPMLEKNNRSYLTIAIGCTGGKHRSVYIAQQLGEYFQAKGKTVQIQHKSLERNKKI</sequence>
<comment type="function">
    <text evidence="1">Displays ATPase and GTPase activities.</text>
</comment>
<comment type="similarity">
    <text evidence="1">Belongs to the RapZ-like family.</text>
</comment>
<reference key="1">
    <citation type="journal article" date="2005" name="J. Bacteriol.">
        <title>Genomic sequence of an otitis media isolate of nontypeable Haemophilus influenzae: comparative study with H. influenzae serotype d, strain KW20.</title>
        <authorList>
            <person name="Harrison A."/>
            <person name="Dyer D.W."/>
            <person name="Gillaspy A."/>
            <person name="Ray W.C."/>
            <person name="Mungur R."/>
            <person name="Carson M.B."/>
            <person name="Zhong H."/>
            <person name="Gipson J."/>
            <person name="Gipson M."/>
            <person name="Johnson L.S."/>
            <person name="Lewis L."/>
            <person name="Bakaletz L.O."/>
            <person name="Munson R.S. Jr."/>
        </authorList>
    </citation>
    <scope>NUCLEOTIDE SEQUENCE [LARGE SCALE GENOMIC DNA]</scope>
    <source>
        <strain>86-028NP</strain>
    </source>
</reference>
<keyword id="KW-0067">ATP-binding</keyword>
<keyword id="KW-0342">GTP-binding</keyword>
<keyword id="KW-0547">Nucleotide-binding</keyword>
<name>Y1314_HAEI8</name>
<dbReference type="EMBL" id="CP000057">
    <property type="protein sequence ID" value="AAX88147.1"/>
    <property type="molecule type" value="Genomic_DNA"/>
</dbReference>
<dbReference type="RefSeq" id="WP_011272402.1">
    <property type="nucleotide sequence ID" value="NC_007146.2"/>
</dbReference>
<dbReference type="SMR" id="Q4QLF0"/>
<dbReference type="KEGG" id="hit:NTHI1314"/>
<dbReference type="HOGENOM" id="CLU_059558_1_1_6"/>
<dbReference type="Proteomes" id="UP000002525">
    <property type="component" value="Chromosome"/>
</dbReference>
<dbReference type="GO" id="GO:0005524">
    <property type="term" value="F:ATP binding"/>
    <property type="evidence" value="ECO:0007669"/>
    <property type="project" value="UniProtKB-UniRule"/>
</dbReference>
<dbReference type="GO" id="GO:0005525">
    <property type="term" value="F:GTP binding"/>
    <property type="evidence" value="ECO:0007669"/>
    <property type="project" value="UniProtKB-UniRule"/>
</dbReference>
<dbReference type="Gene3D" id="3.40.50.300">
    <property type="entry name" value="P-loop containing nucleotide triphosphate hydrolases"/>
    <property type="match status" value="1"/>
</dbReference>
<dbReference type="HAMAP" id="MF_00636">
    <property type="entry name" value="RapZ_like"/>
    <property type="match status" value="1"/>
</dbReference>
<dbReference type="InterPro" id="IPR027417">
    <property type="entry name" value="P-loop_NTPase"/>
</dbReference>
<dbReference type="InterPro" id="IPR005337">
    <property type="entry name" value="RapZ-like"/>
</dbReference>
<dbReference type="InterPro" id="IPR053930">
    <property type="entry name" value="RapZ-like_N"/>
</dbReference>
<dbReference type="InterPro" id="IPR053931">
    <property type="entry name" value="RapZ_C"/>
</dbReference>
<dbReference type="NCBIfam" id="NF003828">
    <property type="entry name" value="PRK05416.1"/>
    <property type="match status" value="1"/>
</dbReference>
<dbReference type="PANTHER" id="PTHR30448">
    <property type="entry name" value="RNASE ADAPTER PROTEIN RAPZ"/>
    <property type="match status" value="1"/>
</dbReference>
<dbReference type="PANTHER" id="PTHR30448:SF0">
    <property type="entry name" value="RNASE ADAPTER PROTEIN RAPZ"/>
    <property type="match status" value="1"/>
</dbReference>
<dbReference type="Pfam" id="PF22740">
    <property type="entry name" value="PapZ_C"/>
    <property type="match status" value="1"/>
</dbReference>
<dbReference type="Pfam" id="PF03668">
    <property type="entry name" value="RapZ-like_N"/>
    <property type="match status" value="1"/>
</dbReference>
<dbReference type="PIRSF" id="PIRSF005052">
    <property type="entry name" value="P-loopkin"/>
    <property type="match status" value="1"/>
</dbReference>
<dbReference type="SUPFAM" id="SSF52540">
    <property type="entry name" value="P-loop containing nucleoside triphosphate hydrolases"/>
    <property type="match status" value="1"/>
</dbReference>
<organism>
    <name type="scientific">Haemophilus influenzae (strain 86-028NP)</name>
    <dbReference type="NCBI Taxonomy" id="281310"/>
    <lineage>
        <taxon>Bacteria</taxon>
        <taxon>Pseudomonadati</taxon>
        <taxon>Pseudomonadota</taxon>
        <taxon>Gammaproteobacteria</taxon>
        <taxon>Pasteurellales</taxon>
        <taxon>Pasteurellaceae</taxon>
        <taxon>Haemophilus</taxon>
    </lineage>
</organism>
<evidence type="ECO:0000255" key="1">
    <source>
        <dbReference type="HAMAP-Rule" id="MF_00636"/>
    </source>
</evidence>
<feature type="chain" id="PRO_0000258966" description="Nucleotide-binding protein NTHI1314">
    <location>
        <begin position="1"/>
        <end position="285"/>
    </location>
</feature>
<feature type="binding site" evidence="1">
    <location>
        <begin position="8"/>
        <end position="15"/>
    </location>
    <ligand>
        <name>ATP</name>
        <dbReference type="ChEBI" id="CHEBI:30616"/>
    </ligand>
</feature>
<feature type="binding site" evidence="1">
    <location>
        <begin position="56"/>
        <end position="59"/>
    </location>
    <ligand>
        <name>GTP</name>
        <dbReference type="ChEBI" id="CHEBI:37565"/>
    </ligand>
</feature>